<comment type="function">
    <text evidence="1">Catalyzes a cyclopropane ring-opening reaction, the irreversible conversion of 1-aminocyclopropane-1-carboxylate (ACC) to ammonia and alpha-ketobutyrate. Allows growth on ACC as a nitrogen source.</text>
</comment>
<comment type="catalytic activity">
    <reaction evidence="1">
        <text>1-aminocyclopropane-1-carboxylate + H2O = 2-oxobutanoate + NH4(+)</text>
        <dbReference type="Rhea" id="RHEA:16933"/>
        <dbReference type="ChEBI" id="CHEBI:15377"/>
        <dbReference type="ChEBI" id="CHEBI:16763"/>
        <dbReference type="ChEBI" id="CHEBI:28938"/>
        <dbReference type="ChEBI" id="CHEBI:58360"/>
        <dbReference type="EC" id="3.5.99.7"/>
    </reaction>
</comment>
<comment type="cofactor">
    <cofactor evidence="1">
        <name>pyridoxal 5'-phosphate</name>
        <dbReference type="ChEBI" id="CHEBI:597326"/>
    </cofactor>
</comment>
<comment type="subunit">
    <text evidence="1">Homotrimer.</text>
</comment>
<comment type="similarity">
    <text evidence="1">Belongs to the ACC deaminase/D-cysteine desulfhydrase family.</text>
</comment>
<organism>
    <name type="scientific">Burkholderia multivorans (strain ATCC 17616 / 249)</name>
    <dbReference type="NCBI Taxonomy" id="395019"/>
    <lineage>
        <taxon>Bacteria</taxon>
        <taxon>Pseudomonadati</taxon>
        <taxon>Pseudomonadota</taxon>
        <taxon>Betaproteobacteria</taxon>
        <taxon>Burkholderiales</taxon>
        <taxon>Burkholderiaceae</taxon>
        <taxon>Burkholderia</taxon>
        <taxon>Burkholderia cepacia complex</taxon>
    </lineage>
</organism>
<keyword id="KW-0378">Hydrolase</keyword>
<keyword id="KW-0663">Pyridoxal phosphate</keyword>
<keyword id="KW-1185">Reference proteome</keyword>
<protein>
    <recommendedName>
        <fullName evidence="1">1-aminocyclopropane-1-carboxylate deaminase</fullName>
        <shortName evidence="1">ACC deaminase</shortName>
        <shortName evidence="1">ACCD</shortName>
        <ecNumber evidence="1">3.5.99.7</ecNumber>
    </recommendedName>
</protein>
<feature type="chain" id="PRO_1000134010" description="1-aminocyclopropane-1-carboxylate deaminase">
    <location>
        <begin position="1"/>
        <end position="338"/>
    </location>
</feature>
<feature type="active site" description="Nucleophile" evidence="1">
    <location>
        <position position="78"/>
    </location>
</feature>
<feature type="modified residue" description="N6-(pyridoxal phosphate)lysine" evidence="1">
    <location>
        <position position="51"/>
    </location>
</feature>
<evidence type="ECO:0000255" key="1">
    <source>
        <dbReference type="HAMAP-Rule" id="MF_00807"/>
    </source>
</evidence>
<proteinExistence type="inferred from homology"/>
<reference key="1">
    <citation type="submission" date="2007-10" db="EMBL/GenBank/DDBJ databases">
        <title>Complete sequence of chromosome 2 of Burkholderia multivorans ATCC 17616.</title>
        <authorList>
            <person name="Copeland A."/>
            <person name="Lucas S."/>
            <person name="Lapidus A."/>
            <person name="Barry K."/>
            <person name="Glavina del Rio T."/>
            <person name="Dalin E."/>
            <person name="Tice H."/>
            <person name="Pitluck S."/>
            <person name="Chain P."/>
            <person name="Malfatti S."/>
            <person name="Shin M."/>
            <person name="Vergez L."/>
            <person name="Schmutz J."/>
            <person name="Larimer F."/>
            <person name="Land M."/>
            <person name="Hauser L."/>
            <person name="Kyrpides N."/>
            <person name="Kim E."/>
            <person name="Tiedje J."/>
            <person name="Richardson P."/>
        </authorList>
    </citation>
    <scope>NUCLEOTIDE SEQUENCE [LARGE SCALE GENOMIC DNA]</scope>
    <source>
        <strain>ATCC 17616 / 249</strain>
    </source>
</reference>
<reference key="2">
    <citation type="submission" date="2007-04" db="EMBL/GenBank/DDBJ databases">
        <title>Complete genome sequence of Burkholderia multivorans ATCC 17616.</title>
        <authorList>
            <person name="Ohtsubo Y."/>
            <person name="Yamashita A."/>
            <person name="Kurokawa K."/>
            <person name="Takami H."/>
            <person name="Yuhara S."/>
            <person name="Nishiyama E."/>
            <person name="Endo R."/>
            <person name="Miyazaki R."/>
            <person name="Ono A."/>
            <person name="Yano K."/>
            <person name="Ito M."/>
            <person name="Sota M."/>
            <person name="Yuji N."/>
            <person name="Hattori M."/>
            <person name="Tsuda M."/>
        </authorList>
    </citation>
    <scope>NUCLEOTIDE SEQUENCE [LARGE SCALE GENOMIC DNA]</scope>
    <source>
        <strain>ATCC 17616 / 249</strain>
    </source>
</reference>
<dbReference type="EC" id="3.5.99.7" evidence="1"/>
<dbReference type="EMBL" id="CP000869">
    <property type="protein sequence ID" value="ABX18885.1"/>
    <property type="molecule type" value="Genomic_DNA"/>
</dbReference>
<dbReference type="EMBL" id="AP009386">
    <property type="protein sequence ID" value="BAG45178.1"/>
    <property type="molecule type" value="Genomic_DNA"/>
</dbReference>
<dbReference type="RefSeq" id="WP_012217704.1">
    <property type="nucleotide sequence ID" value="NC_010086.1"/>
</dbReference>
<dbReference type="SMR" id="A9AQJ3"/>
<dbReference type="STRING" id="395019.BMULJ_03304"/>
<dbReference type="KEGG" id="bmj:BMULJ_03304"/>
<dbReference type="KEGG" id="bmu:Bmul_5215"/>
<dbReference type="eggNOG" id="COG2515">
    <property type="taxonomic scope" value="Bacteria"/>
</dbReference>
<dbReference type="HOGENOM" id="CLU_048897_2_1_4"/>
<dbReference type="Proteomes" id="UP000008815">
    <property type="component" value="Chromosome 2"/>
</dbReference>
<dbReference type="GO" id="GO:0008660">
    <property type="term" value="F:1-aminocyclopropane-1-carboxylate deaminase activity"/>
    <property type="evidence" value="ECO:0007669"/>
    <property type="project" value="UniProtKB-UniRule"/>
</dbReference>
<dbReference type="GO" id="GO:0019148">
    <property type="term" value="F:D-cysteine desulfhydrase activity"/>
    <property type="evidence" value="ECO:0007669"/>
    <property type="project" value="TreeGrafter"/>
</dbReference>
<dbReference type="GO" id="GO:0030170">
    <property type="term" value="F:pyridoxal phosphate binding"/>
    <property type="evidence" value="ECO:0007669"/>
    <property type="project" value="InterPro"/>
</dbReference>
<dbReference type="GO" id="GO:0018871">
    <property type="term" value="P:1-aminocyclopropane-1-carboxylate metabolic process"/>
    <property type="evidence" value="ECO:0007669"/>
    <property type="project" value="UniProtKB-UniRule"/>
</dbReference>
<dbReference type="GO" id="GO:0009310">
    <property type="term" value="P:amine catabolic process"/>
    <property type="evidence" value="ECO:0007669"/>
    <property type="project" value="InterPro"/>
</dbReference>
<dbReference type="CDD" id="cd06449">
    <property type="entry name" value="ACCD"/>
    <property type="match status" value="1"/>
</dbReference>
<dbReference type="FunFam" id="3.40.50.1100:FF:000048">
    <property type="entry name" value="1-aminocyclopropane-1-carboxylate deaminase"/>
    <property type="match status" value="1"/>
</dbReference>
<dbReference type="Gene3D" id="3.40.50.1100">
    <property type="match status" value="2"/>
</dbReference>
<dbReference type="HAMAP" id="MF_00807">
    <property type="entry name" value="ACC_deaminase"/>
    <property type="match status" value="1"/>
</dbReference>
<dbReference type="InterPro" id="IPR027278">
    <property type="entry name" value="ACCD_DCysDesulf"/>
</dbReference>
<dbReference type="InterPro" id="IPR005965">
    <property type="entry name" value="ACP_carboxylate_deaminase"/>
</dbReference>
<dbReference type="InterPro" id="IPR020601">
    <property type="entry name" value="ACP_carboxylate_deaminase_bac"/>
</dbReference>
<dbReference type="InterPro" id="IPR001926">
    <property type="entry name" value="TrpB-like_PALP"/>
</dbReference>
<dbReference type="InterPro" id="IPR036052">
    <property type="entry name" value="TrpB-like_PALP_sf"/>
</dbReference>
<dbReference type="NCBIfam" id="TIGR01274">
    <property type="entry name" value="ACC_deam"/>
    <property type="match status" value="1"/>
</dbReference>
<dbReference type="PANTHER" id="PTHR43780">
    <property type="entry name" value="1-AMINOCYCLOPROPANE-1-CARBOXYLATE DEAMINASE-RELATED"/>
    <property type="match status" value="1"/>
</dbReference>
<dbReference type="PANTHER" id="PTHR43780:SF2">
    <property type="entry name" value="1-AMINOCYCLOPROPANE-1-CARBOXYLATE DEAMINASE-RELATED"/>
    <property type="match status" value="1"/>
</dbReference>
<dbReference type="Pfam" id="PF00291">
    <property type="entry name" value="PALP"/>
    <property type="match status" value="1"/>
</dbReference>
<dbReference type="PIRSF" id="PIRSF006278">
    <property type="entry name" value="ACCD_DCysDesulf"/>
    <property type="match status" value="1"/>
</dbReference>
<dbReference type="SUPFAM" id="SSF53686">
    <property type="entry name" value="Tryptophan synthase beta subunit-like PLP-dependent enzymes"/>
    <property type="match status" value="1"/>
</dbReference>
<accession>A9AQJ3</accession>
<name>1A1D_BURM1</name>
<sequence>MNLQRFPRYPLTFGPTPIQPLKRLSEHLGGKVELYAKREDCNSGLAFGGNKTRKLEYLIPDALEQRADTLVSIGGVQSNQTRQVAAVAAHLGMKCVLVQEHWVNYDDPVYDRVGNIQLSRMMGADVRLVPDGFDIGIRRSWEEALESVKQAGGRPYPIPAGCSEHPLGGLGFVGFAEEVRAQEAQFGLRFDYIVVCSVTGSTQAGMIVGFAADGRADRVIGIDASATPARTREQITRIARHTAELVDLGRDITDADVVLDTRYAGPEYGLPNEGTLEAIRLCARLEGVLTDPVYEGKSMHGMIDKVRRGEFEPGSKVLYAHLGGVPALSAYSAIFADG</sequence>
<gene>
    <name evidence="1" type="primary">acdS</name>
    <name type="ordered locus">Bmul_5215</name>
    <name type="ordered locus">BMULJ_03304</name>
</gene>